<keyword id="KW-0378">Hydrolase</keyword>
<keyword id="KW-0441">Lipid A biosynthesis</keyword>
<keyword id="KW-0444">Lipid biosynthesis</keyword>
<keyword id="KW-0443">Lipid metabolism</keyword>
<keyword id="KW-0479">Metal-binding</keyword>
<keyword id="KW-1185">Reference proteome</keyword>
<keyword id="KW-0862">Zinc</keyword>
<comment type="function">
    <text evidence="1">Catalyzes the hydrolysis of UDP-3-O-myristoyl-N-acetylglucosamine to form UDP-3-O-myristoylglucosamine and acetate, the committed step in lipid A biosynthesis.</text>
</comment>
<comment type="catalytic activity">
    <reaction evidence="1">
        <text>a UDP-3-O-[(3R)-3-hydroxyacyl]-N-acetyl-alpha-D-glucosamine + H2O = a UDP-3-O-[(3R)-3-hydroxyacyl]-alpha-D-glucosamine + acetate</text>
        <dbReference type="Rhea" id="RHEA:67816"/>
        <dbReference type="ChEBI" id="CHEBI:15377"/>
        <dbReference type="ChEBI" id="CHEBI:30089"/>
        <dbReference type="ChEBI" id="CHEBI:137740"/>
        <dbReference type="ChEBI" id="CHEBI:173225"/>
        <dbReference type="EC" id="3.5.1.108"/>
    </reaction>
</comment>
<comment type="cofactor">
    <cofactor evidence="1">
        <name>Zn(2+)</name>
        <dbReference type="ChEBI" id="CHEBI:29105"/>
    </cofactor>
</comment>
<comment type="pathway">
    <text evidence="1">Glycolipid biosynthesis; lipid IV(A) biosynthesis; lipid IV(A) from (3R)-3-hydroxytetradecanoyl-[acyl-carrier-protein] and UDP-N-acetyl-alpha-D-glucosamine: step 2/6.</text>
</comment>
<comment type="similarity">
    <text evidence="1">Belongs to the LpxC family.</text>
</comment>
<feature type="chain" id="PRO_1000122768" description="UDP-3-O-acyl-N-acetylglucosamine deacetylase">
    <location>
        <begin position="1"/>
        <end position="305"/>
    </location>
</feature>
<feature type="active site" description="Proton donor" evidence="1">
    <location>
        <position position="264"/>
    </location>
</feature>
<feature type="binding site" evidence="1">
    <location>
        <position position="78"/>
    </location>
    <ligand>
        <name>Zn(2+)</name>
        <dbReference type="ChEBI" id="CHEBI:29105"/>
    </ligand>
</feature>
<feature type="binding site" evidence="1">
    <location>
        <position position="237"/>
    </location>
    <ligand>
        <name>Zn(2+)</name>
        <dbReference type="ChEBI" id="CHEBI:29105"/>
    </ligand>
</feature>
<feature type="binding site" evidence="1">
    <location>
        <position position="241"/>
    </location>
    <ligand>
        <name>Zn(2+)</name>
        <dbReference type="ChEBI" id="CHEBI:29105"/>
    </ligand>
</feature>
<gene>
    <name evidence="1" type="primary">lpxC</name>
    <name type="ordered locus">Bmul_2829</name>
    <name type="ordered locus">BMULJ_00409</name>
</gene>
<accession>A9AI89</accession>
<sequence>MLKQRTIKSIVKTVGIGLHSGRKVELTLRPAAPGTGIVFSRVDLPTPVDIPASAMSIGDTRLASVLQKDGARVSTIEHLMSACAGLGIDNLYVDVTAEEIPIMDGSAASFVFLIQSAGIEEQNAPKRFIKVKKPVEVRDGDKFARLDPFFGFKLKFTIDFRHPAVDKTGQALEVDFANTSYVREIARARTFGFAHEVEMMRELGLARGGSMDNAIVLDEYRILNNDGLRYDDEFVKHKMLDAIGDLYVVGHPLLASYTAYKSGHGLNNALLRELLAHEDAYEIVTFDDPQAAPSGFAFDTQTAFA</sequence>
<dbReference type="EC" id="3.5.1.108" evidence="1"/>
<dbReference type="EMBL" id="CP000868">
    <property type="protein sequence ID" value="ABX16513.1"/>
    <property type="molecule type" value="Genomic_DNA"/>
</dbReference>
<dbReference type="EMBL" id="AP009385">
    <property type="protein sequence ID" value="BAG42377.1"/>
    <property type="molecule type" value="Genomic_DNA"/>
</dbReference>
<dbReference type="RefSeq" id="WP_012214184.1">
    <property type="nucleotide sequence ID" value="NC_010804.1"/>
</dbReference>
<dbReference type="SMR" id="A9AI89"/>
<dbReference type="STRING" id="395019.BMULJ_00409"/>
<dbReference type="GeneID" id="89568849"/>
<dbReference type="KEGG" id="bmj:BMULJ_00409"/>
<dbReference type="KEGG" id="bmu:Bmul_2829"/>
<dbReference type="eggNOG" id="COG0774">
    <property type="taxonomic scope" value="Bacteria"/>
</dbReference>
<dbReference type="HOGENOM" id="CLU_046528_1_0_4"/>
<dbReference type="UniPathway" id="UPA00359">
    <property type="reaction ID" value="UER00478"/>
</dbReference>
<dbReference type="Proteomes" id="UP000008815">
    <property type="component" value="Chromosome 1"/>
</dbReference>
<dbReference type="GO" id="GO:0016020">
    <property type="term" value="C:membrane"/>
    <property type="evidence" value="ECO:0007669"/>
    <property type="project" value="GOC"/>
</dbReference>
<dbReference type="GO" id="GO:0046872">
    <property type="term" value="F:metal ion binding"/>
    <property type="evidence" value="ECO:0007669"/>
    <property type="project" value="UniProtKB-KW"/>
</dbReference>
<dbReference type="GO" id="GO:0103117">
    <property type="term" value="F:UDP-3-O-acyl-N-acetylglucosamine deacetylase activity"/>
    <property type="evidence" value="ECO:0007669"/>
    <property type="project" value="UniProtKB-UniRule"/>
</dbReference>
<dbReference type="GO" id="GO:0009245">
    <property type="term" value="P:lipid A biosynthetic process"/>
    <property type="evidence" value="ECO:0007669"/>
    <property type="project" value="UniProtKB-UniRule"/>
</dbReference>
<dbReference type="Gene3D" id="3.30.230.20">
    <property type="entry name" value="lpxc deacetylase, domain 1"/>
    <property type="match status" value="1"/>
</dbReference>
<dbReference type="Gene3D" id="3.30.1700.10">
    <property type="entry name" value="lpxc deacetylase, domain 2"/>
    <property type="match status" value="1"/>
</dbReference>
<dbReference type="HAMAP" id="MF_00388">
    <property type="entry name" value="LpxC"/>
    <property type="match status" value="1"/>
</dbReference>
<dbReference type="InterPro" id="IPR020568">
    <property type="entry name" value="Ribosomal_Su5_D2-typ_SF"/>
</dbReference>
<dbReference type="InterPro" id="IPR004463">
    <property type="entry name" value="UDP-acyl_GlcNac_deAcase"/>
</dbReference>
<dbReference type="InterPro" id="IPR011334">
    <property type="entry name" value="UDP-acyl_GlcNac_deAcase_C"/>
</dbReference>
<dbReference type="InterPro" id="IPR015870">
    <property type="entry name" value="UDP-acyl_N-AcGlcN_deAcase_N"/>
</dbReference>
<dbReference type="NCBIfam" id="TIGR00325">
    <property type="entry name" value="lpxC"/>
    <property type="match status" value="1"/>
</dbReference>
<dbReference type="PANTHER" id="PTHR33694">
    <property type="entry name" value="UDP-3-O-ACYL-N-ACETYLGLUCOSAMINE DEACETYLASE 1, MITOCHONDRIAL-RELATED"/>
    <property type="match status" value="1"/>
</dbReference>
<dbReference type="PANTHER" id="PTHR33694:SF1">
    <property type="entry name" value="UDP-3-O-ACYL-N-ACETYLGLUCOSAMINE DEACETYLASE 1, MITOCHONDRIAL-RELATED"/>
    <property type="match status" value="1"/>
</dbReference>
<dbReference type="Pfam" id="PF03331">
    <property type="entry name" value="LpxC"/>
    <property type="match status" value="1"/>
</dbReference>
<dbReference type="SUPFAM" id="SSF54211">
    <property type="entry name" value="Ribosomal protein S5 domain 2-like"/>
    <property type="match status" value="2"/>
</dbReference>
<name>LPXC_BURM1</name>
<protein>
    <recommendedName>
        <fullName evidence="1">UDP-3-O-acyl-N-acetylglucosamine deacetylase</fullName>
        <shortName evidence="1">UDP-3-O-acyl-GlcNAc deacetylase</shortName>
        <ecNumber evidence="1">3.5.1.108</ecNumber>
    </recommendedName>
    <alternativeName>
        <fullName evidence="1">UDP-3-O-[R-3-hydroxymyristoyl]-N-acetylglucosamine deacetylase</fullName>
    </alternativeName>
</protein>
<evidence type="ECO:0000255" key="1">
    <source>
        <dbReference type="HAMAP-Rule" id="MF_00388"/>
    </source>
</evidence>
<organism>
    <name type="scientific">Burkholderia multivorans (strain ATCC 17616 / 249)</name>
    <dbReference type="NCBI Taxonomy" id="395019"/>
    <lineage>
        <taxon>Bacteria</taxon>
        <taxon>Pseudomonadati</taxon>
        <taxon>Pseudomonadota</taxon>
        <taxon>Betaproteobacteria</taxon>
        <taxon>Burkholderiales</taxon>
        <taxon>Burkholderiaceae</taxon>
        <taxon>Burkholderia</taxon>
        <taxon>Burkholderia cepacia complex</taxon>
    </lineage>
</organism>
<reference key="1">
    <citation type="submission" date="2007-10" db="EMBL/GenBank/DDBJ databases">
        <title>Complete sequence of chromosome 1 of Burkholderia multivorans ATCC 17616.</title>
        <authorList>
            <person name="Copeland A."/>
            <person name="Lucas S."/>
            <person name="Lapidus A."/>
            <person name="Barry K."/>
            <person name="Glavina del Rio T."/>
            <person name="Dalin E."/>
            <person name="Tice H."/>
            <person name="Pitluck S."/>
            <person name="Chain P."/>
            <person name="Malfatti S."/>
            <person name="Shin M."/>
            <person name="Vergez L."/>
            <person name="Schmutz J."/>
            <person name="Larimer F."/>
            <person name="Land M."/>
            <person name="Hauser L."/>
            <person name="Kyrpides N."/>
            <person name="Kim E."/>
            <person name="Tiedje J."/>
            <person name="Richardson P."/>
        </authorList>
    </citation>
    <scope>NUCLEOTIDE SEQUENCE [LARGE SCALE GENOMIC DNA]</scope>
    <source>
        <strain>ATCC 17616 / 249</strain>
    </source>
</reference>
<reference key="2">
    <citation type="submission" date="2007-04" db="EMBL/GenBank/DDBJ databases">
        <title>Complete genome sequence of Burkholderia multivorans ATCC 17616.</title>
        <authorList>
            <person name="Ohtsubo Y."/>
            <person name="Yamashita A."/>
            <person name="Kurokawa K."/>
            <person name="Takami H."/>
            <person name="Yuhara S."/>
            <person name="Nishiyama E."/>
            <person name="Endo R."/>
            <person name="Miyazaki R."/>
            <person name="Ono A."/>
            <person name="Yano K."/>
            <person name="Ito M."/>
            <person name="Sota M."/>
            <person name="Yuji N."/>
            <person name="Hattori M."/>
            <person name="Tsuda M."/>
        </authorList>
    </citation>
    <scope>NUCLEOTIDE SEQUENCE [LARGE SCALE GENOMIC DNA]</scope>
    <source>
        <strain>ATCC 17616 / 249</strain>
    </source>
</reference>
<proteinExistence type="inferred from homology"/>